<gene>
    <name evidence="1" type="primary">groES3</name>
    <name evidence="1" type="synonym">groS3</name>
    <name type="ordered locus">msl5812</name>
</gene>
<organism>
    <name type="scientific">Mesorhizobium japonicum (strain LMG 29417 / CECT 9101 / MAFF 303099)</name>
    <name type="common">Mesorhizobium loti (strain MAFF 303099)</name>
    <dbReference type="NCBI Taxonomy" id="266835"/>
    <lineage>
        <taxon>Bacteria</taxon>
        <taxon>Pseudomonadati</taxon>
        <taxon>Pseudomonadota</taxon>
        <taxon>Alphaproteobacteria</taxon>
        <taxon>Hyphomicrobiales</taxon>
        <taxon>Phyllobacteriaceae</taxon>
        <taxon>Mesorhizobium</taxon>
    </lineage>
</organism>
<name>CH103_RHILO</name>
<accession>Q98AX8</accession>
<dbReference type="EMBL" id="BA000012">
    <property type="protein sequence ID" value="BAB52194.1"/>
    <property type="molecule type" value="Genomic_DNA"/>
</dbReference>
<dbReference type="SMR" id="Q98AX8"/>
<dbReference type="KEGG" id="mlo:msl5812"/>
<dbReference type="eggNOG" id="COG0234">
    <property type="taxonomic scope" value="Bacteria"/>
</dbReference>
<dbReference type="HOGENOM" id="CLU_132825_2_0_5"/>
<dbReference type="Proteomes" id="UP000000552">
    <property type="component" value="Chromosome"/>
</dbReference>
<dbReference type="GO" id="GO:0005737">
    <property type="term" value="C:cytoplasm"/>
    <property type="evidence" value="ECO:0007669"/>
    <property type="project" value="UniProtKB-SubCell"/>
</dbReference>
<dbReference type="GO" id="GO:0005524">
    <property type="term" value="F:ATP binding"/>
    <property type="evidence" value="ECO:0007669"/>
    <property type="project" value="InterPro"/>
</dbReference>
<dbReference type="GO" id="GO:0046872">
    <property type="term" value="F:metal ion binding"/>
    <property type="evidence" value="ECO:0007669"/>
    <property type="project" value="TreeGrafter"/>
</dbReference>
<dbReference type="GO" id="GO:0044183">
    <property type="term" value="F:protein folding chaperone"/>
    <property type="evidence" value="ECO:0007669"/>
    <property type="project" value="InterPro"/>
</dbReference>
<dbReference type="GO" id="GO:0051087">
    <property type="term" value="F:protein-folding chaperone binding"/>
    <property type="evidence" value="ECO:0007669"/>
    <property type="project" value="TreeGrafter"/>
</dbReference>
<dbReference type="GO" id="GO:0051082">
    <property type="term" value="F:unfolded protein binding"/>
    <property type="evidence" value="ECO:0007669"/>
    <property type="project" value="TreeGrafter"/>
</dbReference>
<dbReference type="GO" id="GO:0051085">
    <property type="term" value="P:chaperone cofactor-dependent protein refolding"/>
    <property type="evidence" value="ECO:0007669"/>
    <property type="project" value="TreeGrafter"/>
</dbReference>
<dbReference type="CDD" id="cd00320">
    <property type="entry name" value="cpn10"/>
    <property type="match status" value="1"/>
</dbReference>
<dbReference type="FunFam" id="2.30.33.40:FF:000001">
    <property type="entry name" value="10 kDa chaperonin"/>
    <property type="match status" value="1"/>
</dbReference>
<dbReference type="Gene3D" id="2.30.33.40">
    <property type="entry name" value="GroES chaperonin"/>
    <property type="match status" value="1"/>
</dbReference>
<dbReference type="HAMAP" id="MF_00580">
    <property type="entry name" value="CH10"/>
    <property type="match status" value="1"/>
</dbReference>
<dbReference type="InterPro" id="IPR020818">
    <property type="entry name" value="Chaperonin_GroES"/>
</dbReference>
<dbReference type="InterPro" id="IPR037124">
    <property type="entry name" value="Chaperonin_GroES_sf"/>
</dbReference>
<dbReference type="InterPro" id="IPR018369">
    <property type="entry name" value="Chaprnonin_Cpn10_CS"/>
</dbReference>
<dbReference type="InterPro" id="IPR011032">
    <property type="entry name" value="GroES-like_sf"/>
</dbReference>
<dbReference type="NCBIfam" id="NF001527">
    <property type="entry name" value="PRK00364.1-2"/>
    <property type="match status" value="1"/>
</dbReference>
<dbReference type="NCBIfam" id="NF001529">
    <property type="entry name" value="PRK00364.1-5"/>
    <property type="match status" value="1"/>
</dbReference>
<dbReference type="NCBIfam" id="NF001531">
    <property type="entry name" value="PRK00364.2-2"/>
    <property type="match status" value="1"/>
</dbReference>
<dbReference type="NCBIfam" id="NF001533">
    <property type="entry name" value="PRK00364.2-4"/>
    <property type="match status" value="1"/>
</dbReference>
<dbReference type="NCBIfam" id="NF001534">
    <property type="entry name" value="PRK00364.2-5"/>
    <property type="match status" value="1"/>
</dbReference>
<dbReference type="PANTHER" id="PTHR10772">
    <property type="entry name" value="10 KDA HEAT SHOCK PROTEIN"/>
    <property type="match status" value="1"/>
</dbReference>
<dbReference type="PANTHER" id="PTHR10772:SF58">
    <property type="entry name" value="CO-CHAPERONIN GROES"/>
    <property type="match status" value="1"/>
</dbReference>
<dbReference type="Pfam" id="PF00166">
    <property type="entry name" value="Cpn10"/>
    <property type="match status" value="1"/>
</dbReference>
<dbReference type="PRINTS" id="PR00297">
    <property type="entry name" value="CHAPERONIN10"/>
</dbReference>
<dbReference type="SMART" id="SM00883">
    <property type="entry name" value="Cpn10"/>
    <property type="match status" value="1"/>
</dbReference>
<dbReference type="SUPFAM" id="SSF50129">
    <property type="entry name" value="GroES-like"/>
    <property type="match status" value="1"/>
</dbReference>
<dbReference type="PROSITE" id="PS00681">
    <property type="entry name" value="CHAPERONINS_CPN10"/>
    <property type="match status" value="1"/>
</dbReference>
<comment type="function">
    <text evidence="1">Together with the chaperonin GroEL, plays an essential role in assisting protein folding. The GroEL-GroES system forms a nano-cage that allows encapsulation of the non-native substrate proteins and provides a physical environment optimized to promote and accelerate protein folding. GroES binds to the apical surface of the GroEL ring, thereby capping the opening of the GroEL channel.</text>
</comment>
<comment type="subunit">
    <text evidence="1">Heptamer of 7 subunits arranged in a ring. Interacts with the chaperonin GroEL.</text>
</comment>
<comment type="subcellular location">
    <subcellularLocation>
        <location evidence="1">Cytoplasm</location>
    </subcellularLocation>
</comment>
<comment type="similarity">
    <text evidence="1 2">Belongs to the GroES chaperonin family.</text>
</comment>
<sequence>MAQSNLRPLHDRVVVRRVESESKTAGGIIIPDTAKEKPQEGEIIAVGSGARDEAGKLVPLDVKAGDRILFGKWSGTEVKLNGEDLLIMKEADIMGIIG</sequence>
<keyword id="KW-0143">Chaperone</keyword>
<keyword id="KW-0963">Cytoplasm</keyword>
<proteinExistence type="inferred from homology"/>
<feature type="chain" id="PRO_0000174814" description="Co-chaperonin GroES 3">
    <location>
        <begin position="1"/>
        <end position="98"/>
    </location>
</feature>
<reference key="1">
    <citation type="journal article" date="2000" name="DNA Res.">
        <title>Complete genome structure of the nitrogen-fixing symbiotic bacterium Mesorhizobium loti.</title>
        <authorList>
            <person name="Kaneko T."/>
            <person name="Nakamura Y."/>
            <person name="Sato S."/>
            <person name="Asamizu E."/>
            <person name="Kato T."/>
            <person name="Sasamoto S."/>
            <person name="Watanabe A."/>
            <person name="Idesawa K."/>
            <person name="Ishikawa A."/>
            <person name="Kawashima K."/>
            <person name="Kimura T."/>
            <person name="Kishida Y."/>
            <person name="Kiyokawa C."/>
            <person name="Kohara M."/>
            <person name="Matsumoto M."/>
            <person name="Matsuno A."/>
            <person name="Mochizuki Y."/>
            <person name="Nakayama S."/>
            <person name="Nakazaki N."/>
            <person name="Shimpo S."/>
            <person name="Sugimoto M."/>
            <person name="Takeuchi C."/>
            <person name="Yamada M."/>
            <person name="Tabata S."/>
        </authorList>
    </citation>
    <scope>NUCLEOTIDE SEQUENCE [LARGE SCALE GENOMIC DNA]</scope>
    <source>
        <strain>LMG 29417 / CECT 9101 / MAFF 303099</strain>
    </source>
</reference>
<protein>
    <recommendedName>
        <fullName evidence="1">Co-chaperonin GroES 3</fullName>
    </recommendedName>
    <alternativeName>
        <fullName evidence="1">10 kDa chaperonin 3</fullName>
    </alternativeName>
    <alternativeName>
        <fullName evidence="1">Chaperonin-10 3</fullName>
        <shortName evidence="1">Cpn10 3</shortName>
    </alternativeName>
</protein>
<evidence type="ECO:0000255" key="1">
    <source>
        <dbReference type="HAMAP-Rule" id="MF_00580"/>
    </source>
</evidence>
<evidence type="ECO:0000305" key="2"/>